<comment type="function">
    <text evidence="2 4">Regulatory subunit of Kv4/D (Shal)-type voltage-gated rapidly inactivating A-type potassium channels. Modulates channel density, inactivation kinetics and rate of recovery from inactivation in a calcium-dependent and isoform-specific manner. Involved in KCND2 and KCND3 trafficking to the cell surface (By similarity). May be required for the expression of I(To) currents in the heart (By similarity).</text>
</comment>
<comment type="subunit">
    <text evidence="2 4">Component of heteromultimeric potassium channels. Identified in potassium channel complexes containing KCND1, KCND2, KCND3, KCNIP1, KCNIP2, KCNIP3, KCNIP4, DPP6 and DPP10 (By similarity). The KCND2-KCNIP2 channel complex contains four KCND2 and four KCNIP2 subunits. Interacts with KCND2 (By similarity). Probably part of a complex consisting of KCNIP1, KCNIP2 isoform 3 and KCND2. At least isoform 2 and isoform 3 can self-associate to form homodimers and homotetramers. Isoform 3 interacts with KCNIP1 in a calcium-dependent manner. Interacts with KCND3; each KCNIP2 monomer interacts with two adjacent KCND3 subunits, through both the N-terminal inactivation ball of a KCND3 subunit and a C-terminal helix from the adjacent KCND3 subunit, clamping them together; this interaction modulates the channel gating kinetics (By similarity).</text>
</comment>
<comment type="subcellular location">
    <subcellularLocation>
        <location evidence="3">Cell membrane</location>
        <topology evidence="3">Lipid-anchor</topology>
    </subcellularLocation>
    <text evidence="3">Detected on lipid rafts (By similarity).</text>
</comment>
<comment type="alternative products">
    <event type="alternative splicing"/>
    <isoform>
        <id>Q8WN03-1</id>
        <name>1</name>
        <name>KChip2b</name>
        <sequence type="displayed"/>
    </isoform>
    <isoform>
        <id>Q8WN03-2</id>
        <name>2</name>
        <sequence type="described" ref="VSP_015063"/>
    </isoform>
    <isoform>
        <id>Q8WN03-3</id>
        <name>3</name>
        <name>KChip2a</name>
        <sequence type="described" ref="VSP_015062"/>
    </isoform>
</comment>
<comment type="tissue specificity">
    <text evidence="7">Expressed in heart ventricle with isoform 1 as most prominent form.</text>
</comment>
<comment type="PTM">
    <text evidence="3">Palmitoylated. Palmitoylation enhances association with the plasma membrane.</text>
</comment>
<comment type="similarity">
    <text evidence="9">Belongs to the recoverin family.</text>
</comment>
<dbReference type="EMBL" id="AF454385">
    <property type="protein sequence ID" value="AAL51035.1"/>
    <property type="molecule type" value="mRNA"/>
</dbReference>
<dbReference type="EMBL" id="AF454386">
    <property type="protein sequence ID" value="AAL51036.1"/>
    <property type="molecule type" value="mRNA"/>
</dbReference>
<dbReference type="EMBL" id="AF454387">
    <property type="protein sequence ID" value="AAL51037.1"/>
    <property type="molecule type" value="mRNA"/>
</dbReference>
<dbReference type="RefSeq" id="XP_004749481.1">
    <molecule id="Q8WN03-1"/>
    <property type="nucleotide sequence ID" value="XM_004749424.2"/>
</dbReference>
<dbReference type="RefSeq" id="XP_004749484.1">
    <property type="nucleotide sequence ID" value="XM_004749427.2"/>
</dbReference>
<dbReference type="RefSeq" id="XP_004749487.1">
    <molecule id="Q8WN03-3"/>
    <property type="nucleotide sequence ID" value="XM_004749430.2"/>
</dbReference>
<dbReference type="SMR" id="Q8WN03"/>
<dbReference type="STRING" id="9669.ENSMPUP00000016787"/>
<dbReference type="GeneID" id="101686160"/>
<dbReference type="KEGG" id="mpuf:101686160"/>
<dbReference type="CTD" id="30819"/>
<dbReference type="eggNOG" id="KOG0044">
    <property type="taxonomic scope" value="Eukaryota"/>
</dbReference>
<dbReference type="HOGENOM" id="CLU_072366_2_2_1"/>
<dbReference type="InParanoid" id="Q8WN03"/>
<dbReference type="OrthoDB" id="191686at2759"/>
<dbReference type="Proteomes" id="UP000000715">
    <property type="component" value="Unplaced"/>
</dbReference>
<dbReference type="GO" id="GO:0005886">
    <property type="term" value="C:plasma membrane"/>
    <property type="evidence" value="ECO:0000250"/>
    <property type="project" value="UniProtKB"/>
</dbReference>
<dbReference type="GO" id="GO:0008076">
    <property type="term" value="C:voltage-gated potassium channel complex"/>
    <property type="evidence" value="ECO:0000250"/>
    <property type="project" value="UniProtKB"/>
</dbReference>
<dbReference type="GO" id="GO:0005509">
    <property type="term" value="F:calcium ion binding"/>
    <property type="evidence" value="ECO:0007669"/>
    <property type="project" value="InterPro"/>
</dbReference>
<dbReference type="GO" id="GO:0005267">
    <property type="term" value="F:potassium channel activity"/>
    <property type="evidence" value="ECO:0007669"/>
    <property type="project" value="UniProtKB-KW"/>
</dbReference>
<dbReference type="GO" id="GO:0015459">
    <property type="term" value="F:potassium channel regulator activity"/>
    <property type="evidence" value="ECO:0000250"/>
    <property type="project" value="UniProtKB"/>
</dbReference>
<dbReference type="GO" id="GO:1901379">
    <property type="term" value="P:regulation of potassium ion transmembrane transport"/>
    <property type="evidence" value="ECO:0000250"/>
    <property type="project" value="UniProtKB"/>
</dbReference>
<dbReference type="CDD" id="cd00051">
    <property type="entry name" value="EFh"/>
    <property type="match status" value="2"/>
</dbReference>
<dbReference type="FunFam" id="1.10.238.10:FF:000043">
    <property type="entry name" value="Kv channel-interacting protein 1 isoform 2"/>
    <property type="match status" value="1"/>
</dbReference>
<dbReference type="Gene3D" id="1.10.238.10">
    <property type="entry name" value="EF-hand"/>
    <property type="match status" value="1"/>
</dbReference>
<dbReference type="InterPro" id="IPR011992">
    <property type="entry name" value="EF-hand-dom_pair"/>
</dbReference>
<dbReference type="InterPro" id="IPR018247">
    <property type="entry name" value="EF_Hand_1_Ca_BS"/>
</dbReference>
<dbReference type="InterPro" id="IPR002048">
    <property type="entry name" value="EF_hand_dom"/>
</dbReference>
<dbReference type="InterPro" id="IPR028846">
    <property type="entry name" value="Recoverin"/>
</dbReference>
<dbReference type="PANTHER" id="PTHR23055">
    <property type="entry name" value="CALCIUM BINDING PROTEINS"/>
    <property type="match status" value="1"/>
</dbReference>
<dbReference type="PANTHER" id="PTHR23055:SF65">
    <property type="entry name" value="KV CHANNEL-INTERACTING PROTEIN 2"/>
    <property type="match status" value="1"/>
</dbReference>
<dbReference type="Pfam" id="PF13499">
    <property type="entry name" value="EF-hand_7"/>
    <property type="match status" value="1"/>
</dbReference>
<dbReference type="Pfam" id="PF13833">
    <property type="entry name" value="EF-hand_8"/>
    <property type="match status" value="1"/>
</dbReference>
<dbReference type="PRINTS" id="PR00450">
    <property type="entry name" value="RECOVERIN"/>
</dbReference>
<dbReference type="SMART" id="SM00054">
    <property type="entry name" value="EFh"/>
    <property type="match status" value="3"/>
</dbReference>
<dbReference type="SUPFAM" id="SSF47473">
    <property type="entry name" value="EF-hand"/>
    <property type="match status" value="1"/>
</dbReference>
<dbReference type="PROSITE" id="PS00018">
    <property type="entry name" value="EF_HAND_1"/>
    <property type="match status" value="3"/>
</dbReference>
<dbReference type="PROSITE" id="PS50222">
    <property type="entry name" value="EF_HAND_2"/>
    <property type="match status" value="3"/>
</dbReference>
<accession>Q8WN03</accession>
<accession>Q8WN04</accession>
<accession>Q8WN05</accession>
<sequence length="270" mass="30947">MRGQGRKESLSDSRDLDGSYDQLTGHPPGPTKKALKQRFLKLLPCCGPQALPSVSETLAVPASLRPHRPRPLDPDSVEDEFELSTVCHRPEGLEQLQEQTKFTRKELQVLYRGFKNECPSGIVNEENFKQIYSQFFPQGDSSTYATFLFNAFDTNHDGSVSFEDFVAGLSVILRGTIDDRLNWAFNLYDLNKDGCITKEEMLDIMKSIYDMMGKYTYPALREEAPREHVESFFQKMDRNKDGVVTIEEFIESCQKDENIMRSMQLFDNVI</sequence>
<name>KCIP2_MUSPF</name>
<protein>
    <recommendedName>
        <fullName evidence="4">A-type potassium channel modulatory protein KCNIP2</fullName>
    </recommendedName>
    <alternativeName>
        <fullName>Kv channel-interacting protein 2</fullName>
        <shortName evidence="4">KChIP2</shortName>
    </alternativeName>
    <alternativeName>
        <fullName>Potassium channel-interacting protein 2</fullName>
    </alternativeName>
</protein>
<proteinExistence type="evidence at transcript level"/>
<keyword id="KW-0025">Alternative splicing</keyword>
<keyword id="KW-0106">Calcium</keyword>
<keyword id="KW-1003">Cell membrane</keyword>
<keyword id="KW-0407">Ion channel</keyword>
<keyword id="KW-0406">Ion transport</keyword>
<keyword id="KW-0449">Lipoprotein</keyword>
<keyword id="KW-0472">Membrane</keyword>
<keyword id="KW-0479">Metal-binding</keyword>
<keyword id="KW-0564">Palmitate</keyword>
<keyword id="KW-0597">Phosphoprotein</keyword>
<keyword id="KW-0630">Potassium</keyword>
<keyword id="KW-0631">Potassium channel</keyword>
<keyword id="KW-0633">Potassium transport</keyword>
<keyword id="KW-1185">Reference proteome</keyword>
<keyword id="KW-0677">Repeat</keyword>
<keyword id="KW-0813">Transport</keyword>
<keyword id="KW-0851">Voltage-gated channel</keyword>
<reference key="1">
    <citation type="journal article" date="2002" name="J. Physiol. (Lond.)">
        <title>Heterogeneous expression of KChIP2 isoforms in the ferret heart.</title>
        <authorList>
            <person name="Patel S.P."/>
            <person name="Campbell D.L."/>
            <person name="Morales M.J."/>
            <person name="Strauss H.C."/>
        </authorList>
    </citation>
    <scope>NUCLEOTIDE SEQUENCE [MRNA] (ISOFORMS 1; 2 AND 3)</scope>
    <scope>TISSUE SPECIFICITY</scope>
    <source>
        <tissue>Heart</tissue>
    </source>
</reference>
<organism>
    <name type="scientific">Mustela putorius furo</name>
    <name type="common">European domestic ferret</name>
    <name type="synonym">Mustela furo</name>
    <dbReference type="NCBI Taxonomy" id="9669"/>
    <lineage>
        <taxon>Eukaryota</taxon>
        <taxon>Metazoa</taxon>
        <taxon>Chordata</taxon>
        <taxon>Craniata</taxon>
        <taxon>Vertebrata</taxon>
        <taxon>Euteleostomi</taxon>
        <taxon>Mammalia</taxon>
        <taxon>Eutheria</taxon>
        <taxon>Laurasiatheria</taxon>
        <taxon>Carnivora</taxon>
        <taxon>Caniformia</taxon>
        <taxon>Musteloidea</taxon>
        <taxon>Mustelidae</taxon>
        <taxon>Mustelinae</taxon>
        <taxon>Mustela</taxon>
    </lineage>
</organism>
<gene>
    <name evidence="4" type="primary">Kcnip2</name>
    <name evidence="4" type="synonym">Kchip2</name>
</gene>
<feature type="chain" id="PRO_0000073823" description="A-type potassium channel modulatory protein KCNIP2">
    <location>
        <begin position="1"/>
        <end position="270"/>
    </location>
</feature>
<feature type="domain" description="EF-hand 1; degenerate" evidence="9">
    <location>
        <begin position="81"/>
        <end position="137"/>
    </location>
</feature>
<feature type="domain" description="EF-hand 2" evidence="5">
    <location>
        <begin position="140"/>
        <end position="175"/>
    </location>
</feature>
<feature type="domain" description="EF-hand 3" evidence="5">
    <location>
        <begin position="176"/>
        <end position="211"/>
    </location>
</feature>
<feature type="domain" description="EF-hand 4" evidence="5">
    <location>
        <begin position="224"/>
        <end position="259"/>
    </location>
</feature>
<feature type="region of interest" description="Disordered" evidence="6">
    <location>
        <begin position="1"/>
        <end position="33"/>
    </location>
</feature>
<feature type="region of interest" description="Interaction with KCND2" evidence="1">
    <location>
        <begin position="257"/>
        <end position="270"/>
    </location>
</feature>
<feature type="compositionally biased region" description="Basic and acidic residues" evidence="6">
    <location>
        <begin position="1"/>
        <end position="17"/>
    </location>
</feature>
<feature type="binding site" evidence="5">
    <location>
        <position position="153"/>
    </location>
    <ligand>
        <name>Ca(2+)</name>
        <dbReference type="ChEBI" id="CHEBI:29108"/>
        <label>1</label>
    </ligand>
</feature>
<feature type="binding site" evidence="5">
    <location>
        <position position="155"/>
    </location>
    <ligand>
        <name>Ca(2+)</name>
        <dbReference type="ChEBI" id="CHEBI:29108"/>
        <label>1</label>
    </ligand>
</feature>
<feature type="binding site" evidence="5">
    <location>
        <position position="157"/>
    </location>
    <ligand>
        <name>Ca(2+)</name>
        <dbReference type="ChEBI" id="CHEBI:29108"/>
        <label>1</label>
    </ligand>
</feature>
<feature type="binding site" evidence="5">
    <location>
        <position position="159"/>
    </location>
    <ligand>
        <name>Ca(2+)</name>
        <dbReference type="ChEBI" id="CHEBI:29108"/>
        <label>1</label>
    </ligand>
</feature>
<feature type="binding site" evidence="5">
    <location>
        <position position="164"/>
    </location>
    <ligand>
        <name>Ca(2+)</name>
        <dbReference type="ChEBI" id="CHEBI:29108"/>
        <label>1</label>
    </ligand>
</feature>
<feature type="binding site" evidence="5">
    <location>
        <position position="189"/>
    </location>
    <ligand>
        <name>Ca(2+)</name>
        <dbReference type="ChEBI" id="CHEBI:29108"/>
        <label>2</label>
    </ligand>
</feature>
<feature type="binding site" evidence="5">
    <location>
        <position position="191"/>
    </location>
    <ligand>
        <name>Ca(2+)</name>
        <dbReference type="ChEBI" id="CHEBI:29108"/>
        <label>2</label>
    </ligand>
</feature>
<feature type="binding site" evidence="5">
    <location>
        <position position="193"/>
    </location>
    <ligand>
        <name>Ca(2+)</name>
        <dbReference type="ChEBI" id="CHEBI:29108"/>
        <label>2</label>
    </ligand>
</feature>
<feature type="binding site" evidence="5">
    <location>
        <position position="195"/>
    </location>
    <ligand>
        <name>Ca(2+)</name>
        <dbReference type="ChEBI" id="CHEBI:29108"/>
        <label>2</label>
    </ligand>
</feature>
<feature type="binding site" evidence="5">
    <location>
        <position position="200"/>
    </location>
    <ligand>
        <name>Ca(2+)</name>
        <dbReference type="ChEBI" id="CHEBI:29108"/>
        <label>2</label>
    </ligand>
</feature>
<feature type="binding site" evidence="5">
    <location>
        <position position="237"/>
    </location>
    <ligand>
        <name>Ca(2+)</name>
        <dbReference type="ChEBI" id="CHEBI:29108"/>
        <label>3</label>
    </ligand>
</feature>
<feature type="binding site" evidence="5">
    <location>
        <position position="239"/>
    </location>
    <ligand>
        <name>Ca(2+)</name>
        <dbReference type="ChEBI" id="CHEBI:29108"/>
        <label>3</label>
    </ligand>
</feature>
<feature type="binding site" evidence="5">
    <location>
        <position position="241"/>
    </location>
    <ligand>
        <name>Ca(2+)</name>
        <dbReference type="ChEBI" id="CHEBI:29108"/>
        <label>3</label>
    </ligand>
</feature>
<feature type="binding site" evidence="5">
    <location>
        <position position="248"/>
    </location>
    <ligand>
        <name>Ca(2+)</name>
        <dbReference type="ChEBI" id="CHEBI:29108"/>
        <label>3</label>
    </ligand>
</feature>
<feature type="modified residue" description="Phosphoserine" evidence="3">
    <location>
        <position position="9"/>
    </location>
</feature>
<feature type="lipid moiety-binding region" description="S-palmitoyl cysteine" evidence="3">
    <location>
        <position position="45"/>
    </location>
</feature>
<feature type="lipid moiety-binding region" description="S-palmitoyl cysteine" evidence="3">
    <location>
        <position position="46"/>
    </location>
</feature>
<feature type="splice variant" id="VSP_015062" description="In isoform 3." evidence="8">
    <location>
        <begin position="25"/>
        <end position="74"/>
    </location>
</feature>
<feature type="splice variant" id="VSP_015063" description="In isoform 2." evidence="8">
    <original>TLAVPASLRPHRPRPLDPD</original>
    <variation>N</variation>
    <location>
        <begin position="57"/>
        <end position="75"/>
    </location>
</feature>
<evidence type="ECO:0000250" key="1">
    <source>
        <dbReference type="UniProtKB" id="Q8R426"/>
    </source>
</evidence>
<evidence type="ECO:0000250" key="2">
    <source>
        <dbReference type="UniProtKB" id="Q9JJ69"/>
    </source>
</evidence>
<evidence type="ECO:0000250" key="3">
    <source>
        <dbReference type="UniProtKB" id="Q9JM59"/>
    </source>
</evidence>
<evidence type="ECO:0000250" key="4">
    <source>
        <dbReference type="UniProtKB" id="Q9NS61"/>
    </source>
</evidence>
<evidence type="ECO:0000255" key="5">
    <source>
        <dbReference type="PROSITE-ProRule" id="PRU00448"/>
    </source>
</evidence>
<evidence type="ECO:0000256" key="6">
    <source>
        <dbReference type="SAM" id="MobiDB-lite"/>
    </source>
</evidence>
<evidence type="ECO:0000269" key="7">
    <source>
    </source>
</evidence>
<evidence type="ECO:0000303" key="8">
    <source>
    </source>
</evidence>
<evidence type="ECO:0000305" key="9"/>